<reference key="1">
    <citation type="journal article" date="1995" name="Biochem. J.">
        <title>The three heavy-chain precursors for the inter-alpha-inhibitor family in mouse: new members of the multicopper oxidase protein group with differential transcription in liver and brain.</title>
        <authorList>
            <person name="Chan P."/>
            <person name="Risler J.-L."/>
            <person name="Raguenez G."/>
            <person name="Salier J.-P."/>
        </authorList>
    </citation>
    <scope>NUCLEOTIDE SEQUENCE [MRNA]</scope>
    <source>
        <strain>C57BL/6N</strain>
        <tissue>Liver</tissue>
    </source>
</reference>
<reference key="2">
    <citation type="journal article" date="2005" name="Science">
        <title>The transcriptional landscape of the mammalian genome.</title>
        <authorList>
            <person name="Carninci P."/>
            <person name="Kasukawa T."/>
            <person name="Katayama S."/>
            <person name="Gough J."/>
            <person name="Frith M.C."/>
            <person name="Maeda N."/>
            <person name="Oyama R."/>
            <person name="Ravasi T."/>
            <person name="Lenhard B."/>
            <person name="Wells C."/>
            <person name="Kodzius R."/>
            <person name="Shimokawa K."/>
            <person name="Bajic V.B."/>
            <person name="Brenner S.E."/>
            <person name="Batalov S."/>
            <person name="Forrest A.R."/>
            <person name="Zavolan M."/>
            <person name="Davis M.J."/>
            <person name="Wilming L.G."/>
            <person name="Aidinis V."/>
            <person name="Allen J.E."/>
            <person name="Ambesi-Impiombato A."/>
            <person name="Apweiler R."/>
            <person name="Aturaliya R.N."/>
            <person name="Bailey T.L."/>
            <person name="Bansal M."/>
            <person name="Baxter L."/>
            <person name="Beisel K.W."/>
            <person name="Bersano T."/>
            <person name="Bono H."/>
            <person name="Chalk A.M."/>
            <person name="Chiu K.P."/>
            <person name="Choudhary V."/>
            <person name="Christoffels A."/>
            <person name="Clutterbuck D.R."/>
            <person name="Crowe M.L."/>
            <person name="Dalla E."/>
            <person name="Dalrymple B.P."/>
            <person name="de Bono B."/>
            <person name="Della Gatta G."/>
            <person name="di Bernardo D."/>
            <person name="Down T."/>
            <person name="Engstrom P."/>
            <person name="Fagiolini M."/>
            <person name="Faulkner G."/>
            <person name="Fletcher C.F."/>
            <person name="Fukushima T."/>
            <person name="Furuno M."/>
            <person name="Futaki S."/>
            <person name="Gariboldi M."/>
            <person name="Georgii-Hemming P."/>
            <person name="Gingeras T.R."/>
            <person name="Gojobori T."/>
            <person name="Green R.E."/>
            <person name="Gustincich S."/>
            <person name="Harbers M."/>
            <person name="Hayashi Y."/>
            <person name="Hensch T.K."/>
            <person name="Hirokawa N."/>
            <person name="Hill D."/>
            <person name="Huminiecki L."/>
            <person name="Iacono M."/>
            <person name="Ikeo K."/>
            <person name="Iwama A."/>
            <person name="Ishikawa T."/>
            <person name="Jakt M."/>
            <person name="Kanapin A."/>
            <person name="Katoh M."/>
            <person name="Kawasawa Y."/>
            <person name="Kelso J."/>
            <person name="Kitamura H."/>
            <person name="Kitano H."/>
            <person name="Kollias G."/>
            <person name="Krishnan S.P."/>
            <person name="Kruger A."/>
            <person name="Kummerfeld S.K."/>
            <person name="Kurochkin I.V."/>
            <person name="Lareau L.F."/>
            <person name="Lazarevic D."/>
            <person name="Lipovich L."/>
            <person name="Liu J."/>
            <person name="Liuni S."/>
            <person name="McWilliam S."/>
            <person name="Madan Babu M."/>
            <person name="Madera M."/>
            <person name="Marchionni L."/>
            <person name="Matsuda H."/>
            <person name="Matsuzawa S."/>
            <person name="Miki H."/>
            <person name="Mignone F."/>
            <person name="Miyake S."/>
            <person name="Morris K."/>
            <person name="Mottagui-Tabar S."/>
            <person name="Mulder N."/>
            <person name="Nakano N."/>
            <person name="Nakauchi H."/>
            <person name="Ng P."/>
            <person name="Nilsson R."/>
            <person name="Nishiguchi S."/>
            <person name="Nishikawa S."/>
            <person name="Nori F."/>
            <person name="Ohara O."/>
            <person name="Okazaki Y."/>
            <person name="Orlando V."/>
            <person name="Pang K.C."/>
            <person name="Pavan W.J."/>
            <person name="Pavesi G."/>
            <person name="Pesole G."/>
            <person name="Petrovsky N."/>
            <person name="Piazza S."/>
            <person name="Reed J."/>
            <person name="Reid J.F."/>
            <person name="Ring B.Z."/>
            <person name="Ringwald M."/>
            <person name="Rost B."/>
            <person name="Ruan Y."/>
            <person name="Salzberg S.L."/>
            <person name="Sandelin A."/>
            <person name="Schneider C."/>
            <person name="Schoenbach C."/>
            <person name="Sekiguchi K."/>
            <person name="Semple C.A."/>
            <person name="Seno S."/>
            <person name="Sessa L."/>
            <person name="Sheng Y."/>
            <person name="Shibata Y."/>
            <person name="Shimada H."/>
            <person name="Shimada K."/>
            <person name="Silva D."/>
            <person name="Sinclair B."/>
            <person name="Sperling S."/>
            <person name="Stupka E."/>
            <person name="Sugiura K."/>
            <person name="Sultana R."/>
            <person name="Takenaka Y."/>
            <person name="Taki K."/>
            <person name="Tammoja K."/>
            <person name="Tan S.L."/>
            <person name="Tang S."/>
            <person name="Taylor M.S."/>
            <person name="Tegner J."/>
            <person name="Teichmann S.A."/>
            <person name="Ueda H.R."/>
            <person name="van Nimwegen E."/>
            <person name="Verardo R."/>
            <person name="Wei C.L."/>
            <person name="Yagi K."/>
            <person name="Yamanishi H."/>
            <person name="Zabarovsky E."/>
            <person name="Zhu S."/>
            <person name="Zimmer A."/>
            <person name="Hide W."/>
            <person name="Bult C."/>
            <person name="Grimmond S.M."/>
            <person name="Teasdale R.D."/>
            <person name="Liu E.T."/>
            <person name="Brusic V."/>
            <person name="Quackenbush J."/>
            <person name="Wahlestedt C."/>
            <person name="Mattick J.S."/>
            <person name="Hume D.A."/>
            <person name="Kai C."/>
            <person name="Sasaki D."/>
            <person name="Tomaru Y."/>
            <person name="Fukuda S."/>
            <person name="Kanamori-Katayama M."/>
            <person name="Suzuki M."/>
            <person name="Aoki J."/>
            <person name="Arakawa T."/>
            <person name="Iida J."/>
            <person name="Imamura K."/>
            <person name="Itoh M."/>
            <person name="Kato T."/>
            <person name="Kawaji H."/>
            <person name="Kawagashira N."/>
            <person name="Kawashima T."/>
            <person name="Kojima M."/>
            <person name="Kondo S."/>
            <person name="Konno H."/>
            <person name="Nakano K."/>
            <person name="Ninomiya N."/>
            <person name="Nishio T."/>
            <person name="Okada M."/>
            <person name="Plessy C."/>
            <person name="Shibata K."/>
            <person name="Shiraki T."/>
            <person name="Suzuki S."/>
            <person name="Tagami M."/>
            <person name="Waki K."/>
            <person name="Watahiki A."/>
            <person name="Okamura-Oho Y."/>
            <person name="Suzuki H."/>
            <person name="Kawai J."/>
            <person name="Hayashizaki Y."/>
        </authorList>
    </citation>
    <scope>NUCLEOTIDE SEQUENCE [LARGE SCALE MRNA]</scope>
    <source>
        <strain>C57BL/6J</strain>
    </source>
</reference>
<reference key="3">
    <citation type="journal article" date="2009" name="PLoS Biol.">
        <title>Lineage-specific biology revealed by a finished genome assembly of the mouse.</title>
        <authorList>
            <person name="Church D.M."/>
            <person name="Goodstadt L."/>
            <person name="Hillier L.W."/>
            <person name="Zody M.C."/>
            <person name="Goldstein S."/>
            <person name="She X."/>
            <person name="Bult C.J."/>
            <person name="Agarwala R."/>
            <person name="Cherry J.L."/>
            <person name="DiCuccio M."/>
            <person name="Hlavina W."/>
            <person name="Kapustin Y."/>
            <person name="Meric P."/>
            <person name="Maglott D."/>
            <person name="Birtle Z."/>
            <person name="Marques A.C."/>
            <person name="Graves T."/>
            <person name="Zhou S."/>
            <person name="Teague B."/>
            <person name="Potamousis K."/>
            <person name="Churas C."/>
            <person name="Place M."/>
            <person name="Herschleb J."/>
            <person name="Runnheim R."/>
            <person name="Forrest D."/>
            <person name="Amos-Landgraf J."/>
            <person name="Schwartz D.C."/>
            <person name="Cheng Z."/>
            <person name="Lindblad-Toh K."/>
            <person name="Eichler E.E."/>
            <person name="Ponting C.P."/>
        </authorList>
    </citation>
    <scope>NUCLEOTIDE SEQUENCE [LARGE SCALE GENOMIC DNA]</scope>
    <source>
        <strain>C57BL/6J</strain>
    </source>
</reference>
<reference key="4">
    <citation type="journal article" date="2004" name="Mol. Cell. Proteomics">
        <title>Phosphoproteomic analysis of the developing mouse brain.</title>
        <authorList>
            <person name="Ballif B.A."/>
            <person name="Villen J."/>
            <person name="Beausoleil S.A."/>
            <person name="Schwartz D."/>
            <person name="Gygi S.P."/>
        </authorList>
    </citation>
    <scope>PHOSPHORYLATION [LARGE SCALE ANALYSIS] AT SER-60</scope>
    <scope>IDENTIFICATION BY MASS SPECTROMETRY [LARGE SCALE ANALYSIS]</scope>
    <source>
        <tissue>Embryonic brain</tissue>
    </source>
</reference>
<reference key="5">
    <citation type="journal article" date="2006" name="J. Proteome Res.">
        <title>Proteome-wide characterization of N-glycosylation events by diagonal chromatography.</title>
        <authorList>
            <person name="Ghesquiere B."/>
            <person name="Van Damme J."/>
            <person name="Martens L."/>
            <person name="Vandekerckhove J."/>
            <person name="Gevaert K."/>
        </authorList>
    </citation>
    <scope>GLYCOSYLATION [LARGE SCALE ANALYSIS] AT ASN-118</scope>
    <source>
        <strain>C57BL/6J</strain>
        <tissue>Plasma</tissue>
    </source>
</reference>
<reference key="6">
    <citation type="journal article" date="2007" name="J. Proteome Res.">
        <title>Enhanced analysis of the mouse plasma proteome using cysteine-containing tryptic glycopeptides.</title>
        <authorList>
            <person name="Bernhard O.K."/>
            <person name="Kapp E.A."/>
            <person name="Simpson R.J."/>
        </authorList>
    </citation>
    <scope>GLYCOSYLATION [LARGE SCALE ANALYSIS] AT ASN-118</scope>
    <source>
        <strain>C57BL/6J</strain>
        <tissue>Plasma</tissue>
    </source>
</reference>
<reference key="7">
    <citation type="journal article" date="2007" name="Proc. Natl. Acad. Sci. U.S.A.">
        <title>Large-scale phosphorylation analysis of mouse liver.</title>
        <authorList>
            <person name="Villen J."/>
            <person name="Beausoleil S.A."/>
            <person name="Gerber S.A."/>
            <person name="Gygi S.P."/>
        </authorList>
    </citation>
    <scope>PHOSPHORYLATION [LARGE SCALE ANALYSIS] AT SER-60</scope>
    <scope>IDENTIFICATION BY MASS SPECTROMETRY [LARGE SCALE ANALYSIS]</scope>
    <source>
        <tissue>Liver</tissue>
    </source>
</reference>
<reference key="8">
    <citation type="journal article" date="2010" name="Cell">
        <title>A tissue-specific atlas of mouse protein phosphorylation and expression.</title>
        <authorList>
            <person name="Huttlin E.L."/>
            <person name="Jedrychowski M.P."/>
            <person name="Elias J.E."/>
            <person name="Goswami T."/>
            <person name="Rad R."/>
            <person name="Beausoleil S.A."/>
            <person name="Villen J."/>
            <person name="Haas W."/>
            <person name="Sowa M.E."/>
            <person name="Gygi S.P."/>
        </authorList>
    </citation>
    <scope>PHOSPHORYLATION [LARGE SCALE ANALYSIS] AT SER-60</scope>
    <scope>IDENTIFICATION BY MASS SPECTROMETRY [LARGE SCALE ANALYSIS]</scope>
    <source>
        <tissue>Brain</tissue>
        <tissue>Brown adipose tissue</tissue>
        <tissue>Heart</tissue>
        <tissue>Kidney</tissue>
        <tissue>Liver</tissue>
        <tissue>Lung</tissue>
        <tissue>Pancreas</tissue>
        <tissue>Spleen</tissue>
        <tissue>Testis</tissue>
    </source>
</reference>
<organism>
    <name type="scientific">Mus musculus</name>
    <name type="common">Mouse</name>
    <dbReference type="NCBI Taxonomy" id="10090"/>
    <lineage>
        <taxon>Eukaryota</taxon>
        <taxon>Metazoa</taxon>
        <taxon>Chordata</taxon>
        <taxon>Craniata</taxon>
        <taxon>Vertebrata</taxon>
        <taxon>Euteleostomi</taxon>
        <taxon>Mammalia</taxon>
        <taxon>Eutheria</taxon>
        <taxon>Euarchontoglires</taxon>
        <taxon>Glires</taxon>
        <taxon>Rodentia</taxon>
        <taxon>Myomorpha</taxon>
        <taxon>Muroidea</taxon>
        <taxon>Muridae</taxon>
        <taxon>Murinae</taxon>
        <taxon>Mus</taxon>
        <taxon>Mus</taxon>
    </lineage>
</organism>
<accession>Q61703</accession>
<accession>A2AKU6</accession>
<accession>Q3UZM0</accession>
<protein>
    <recommendedName>
        <fullName>Inter-alpha-trypsin inhibitor heavy chain H2</fullName>
        <shortName>ITI heavy chain H2</shortName>
        <shortName>ITI-HC2</shortName>
        <shortName>Inter-alpha-inhibitor heavy chain 2</shortName>
    </recommendedName>
</protein>
<gene>
    <name type="primary">Itih2</name>
</gene>
<evidence type="ECO:0000250" key="1"/>
<evidence type="ECO:0000250" key="2">
    <source>
        <dbReference type="UniProtKB" id="P19823"/>
    </source>
</evidence>
<evidence type="ECO:0000255" key="3"/>
<evidence type="ECO:0000255" key="4">
    <source>
        <dbReference type="PROSITE-ProRule" id="PRU00219"/>
    </source>
</evidence>
<evidence type="ECO:0000255" key="5">
    <source>
        <dbReference type="PROSITE-ProRule" id="PRU00801"/>
    </source>
</evidence>
<evidence type="ECO:0000269" key="6">
    <source>
    </source>
</evidence>
<evidence type="ECO:0000269" key="7">
    <source>
    </source>
</evidence>
<evidence type="ECO:0000305" key="8"/>
<evidence type="ECO:0007744" key="9">
    <source>
    </source>
</evidence>
<evidence type="ECO:0007744" key="10">
    <source>
    </source>
</evidence>
<evidence type="ECO:0007744" key="11">
    <source>
    </source>
</evidence>
<keyword id="KW-0301">Gamma-carboxyglutamic acid</keyword>
<keyword id="KW-0325">Glycoprotein</keyword>
<keyword id="KW-0597">Phosphoprotein</keyword>
<keyword id="KW-0646">Protease inhibitor</keyword>
<keyword id="KW-0654">Proteoglycan</keyword>
<keyword id="KW-1185">Reference proteome</keyword>
<keyword id="KW-0964">Secreted</keyword>
<keyword id="KW-0722">Serine protease inhibitor</keyword>
<keyword id="KW-0732">Signal</keyword>
<proteinExistence type="evidence at protein level"/>
<name>ITIH2_MOUSE</name>
<sequence>MQRPVCLLIWLFLLEAQAFEIPINGNSEFAEYSDLVELAPDKLPFVQENGRHQRSLPEESGEETDTVDPVTLYSYKVQSTITSRVATTTIQSKLVNNSPLPQSVVFDVQIPKGAFISNFTMTVNGMTFTSSIKEKTVGRALYSQARAKGKTAGWVRSRTLDMENFNTEVNIPPGAKVQFELHYQEVKWRKLGSYEHKIHLQPGKLAKHLEVNVWIIEPQGMRFLHVPDTFEGHFQGVPVISKGQQKAHVSFKPTVAQQRKCPNCTETAVNGELVVMYDVNREEKAGELEVFNGYFVHFFAPENLDPIPKNILFVIDVSGSMWGIKMKQTVEAMKTILDDLRTDDQFSVVDFNHNVRTWRNDLVSATKTQIADAKRYIEKIQPSGGTNINEALLRAIFILNEASNMGLLNPDSVSLIILVSDGDPTVGELKLSKIQKNVKQSIQDNISLFSLGIGFDVDYDFLKRLSNENRGIAQRIYGNQDTSSQLKKFYNQVSTPLLRNVQFNYPQASVTDVTQNNFHNYFGGSEIVVAGKFDPSKLTEVQSIITATSANTELVLETLSQMDDLEEFLSKDKHADPDFTKKLWAYLTINQLLAERSLAPTAAIKRKITKTILQMSLDHHIVTPLTAMVIENDAGDERMLADSPPQDHSCCSGALYYGTKVASGPIPSWANPSPTPMSAMLAVGAKPLESTPPTHLNQVENDPHFIIYLPKSKRNICFNIDSEPGKILSLVSDPESGIVVNGQLIGAKRAENGKLSTYFGKLGFYFQKEGMKIEISTETITLSSGSSTSRLSWSDTAHLGNSRVLISVKKEKSVTLTLNKELFFSVLLHRVWRKHPVNVDFLGIYAPPIDKFSPRVHGLLGQFMQEPAIHIFNERPGKEPGKPEASMEVKGHKLTVTRGLQKDYRTDIVFGTDVPCWFVHNSGKGFIDGHYKDYFVPQLYSFLKRP</sequence>
<dbReference type="EMBL" id="X70392">
    <property type="protein sequence ID" value="CAA49842.1"/>
    <property type="molecule type" value="mRNA"/>
</dbReference>
<dbReference type="EMBL" id="AK133782">
    <property type="protein sequence ID" value="BAE21837.1"/>
    <property type="status" value="ALT_INIT"/>
    <property type="molecule type" value="mRNA"/>
</dbReference>
<dbReference type="EMBL" id="AL772367">
    <property type="status" value="NOT_ANNOTATED_CDS"/>
    <property type="molecule type" value="Genomic_DNA"/>
</dbReference>
<dbReference type="CCDS" id="CCDS15677.2"/>
<dbReference type="PIR" id="S54354">
    <property type="entry name" value="S54354"/>
</dbReference>
<dbReference type="RefSeq" id="NP_034712.3">
    <property type="nucleotide sequence ID" value="NM_010582.4"/>
</dbReference>
<dbReference type="SMR" id="Q61703"/>
<dbReference type="BioGRID" id="200837">
    <property type="interactions" value="2"/>
</dbReference>
<dbReference type="FunCoup" id="Q61703">
    <property type="interactions" value="80"/>
</dbReference>
<dbReference type="IntAct" id="Q61703">
    <property type="interactions" value="1"/>
</dbReference>
<dbReference type="STRING" id="10090.ENSMUSP00000046530"/>
<dbReference type="GlyCosmos" id="Q61703">
    <property type="glycosylation" value="3 sites, No reported glycans"/>
</dbReference>
<dbReference type="GlyGen" id="Q61703">
    <property type="glycosylation" value="5 sites, 1 N-linked glycan (1 site), 1 O-linked glycan (1 site)"/>
</dbReference>
<dbReference type="iPTMnet" id="Q61703"/>
<dbReference type="PhosphoSitePlus" id="Q61703"/>
<dbReference type="CPTAC" id="non-CPTAC-5611"/>
<dbReference type="jPOST" id="Q61703"/>
<dbReference type="PaxDb" id="10090-ENSMUSP00000046530"/>
<dbReference type="ProteomicsDB" id="269414"/>
<dbReference type="DNASU" id="16425"/>
<dbReference type="Ensembl" id="ENSMUST00000042290.14">
    <property type="protein sequence ID" value="ENSMUSP00000046530.9"/>
    <property type="gene ID" value="ENSMUSG00000037254.19"/>
</dbReference>
<dbReference type="GeneID" id="16425"/>
<dbReference type="KEGG" id="mmu:16425"/>
<dbReference type="AGR" id="MGI:96619"/>
<dbReference type="CTD" id="3698"/>
<dbReference type="MGI" id="MGI:96619">
    <property type="gene designation" value="Itih2"/>
</dbReference>
<dbReference type="eggNOG" id="ENOG502QPS2">
    <property type="taxonomic scope" value="Eukaryota"/>
</dbReference>
<dbReference type="GeneTree" id="ENSGT00940000157945"/>
<dbReference type="InParanoid" id="Q61703"/>
<dbReference type="OrthoDB" id="299997at2759"/>
<dbReference type="PhylomeDB" id="Q61703"/>
<dbReference type="Reactome" id="R-MMU-381426">
    <property type="pathway name" value="Regulation of Insulin-like Growth Factor (IGF) transport and uptake by Insulin-like Growth Factor Binding Proteins (IGFBPs)"/>
</dbReference>
<dbReference type="Reactome" id="R-MMU-8957275">
    <property type="pathway name" value="Post-translational protein phosphorylation"/>
</dbReference>
<dbReference type="BioGRID-ORCS" id="16425">
    <property type="hits" value="1 hit in 77 CRISPR screens"/>
</dbReference>
<dbReference type="ChiTaRS" id="Itih2">
    <property type="organism name" value="mouse"/>
</dbReference>
<dbReference type="PRO" id="PR:Q61703"/>
<dbReference type="Proteomes" id="UP000000589">
    <property type="component" value="Chromosome 2"/>
</dbReference>
<dbReference type="RNAct" id="Q61703">
    <property type="molecule type" value="protein"/>
</dbReference>
<dbReference type="GO" id="GO:0062023">
    <property type="term" value="C:collagen-containing extracellular matrix"/>
    <property type="evidence" value="ECO:0007005"/>
    <property type="project" value="BHF-UCL"/>
</dbReference>
<dbReference type="GO" id="GO:0005576">
    <property type="term" value="C:extracellular region"/>
    <property type="evidence" value="ECO:0007669"/>
    <property type="project" value="UniProtKB-SubCell"/>
</dbReference>
<dbReference type="GO" id="GO:0005540">
    <property type="term" value="F:hyaluronic acid binding"/>
    <property type="evidence" value="ECO:0007669"/>
    <property type="project" value="Ensembl"/>
</dbReference>
<dbReference type="GO" id="GO:0004867">
    <property type="term" value="F:serine-type endopeptidase inhibitor activity"/>
    <property type="evidence" value="ECO:0007669"/>
    <property type="project" value="UniProtKB-KW"/>
</dbReference>
<dbReference type="GO" id="GO:0030212">
    <property type="term" value="P:hyaluronan metabolic process"/>
    <property type="evidence" value="ECO:0007669"/>
    <property type="project" value="InterPro"/>
</dbReference>
<dbReference type="CDD" id="cd01461">
    <property type="entry name" value="vWA_interalpha_trypsin_inhibitor"/>
    <property type="match status" value="1"/>
</dbReference>
<dbReference type="FunFam" id="3.40.50.410:FF:000013">
    <property type="entry name" value="inter-alpha-trypsin inhibitor heavy chain H2"/>
    <property type="match status" value="1"/>
</dbReference>
<dbReference type="Gene3D" id="3.40.50.410">
    <property type="entry name" value="von Willebrand factor, type A domain"/>
    <property type="match status" value="1"/>
</dbReference>
<dbReference type="InterPro" id="IPR010600">
    <property type="entry name" value="ITI_HC_C"/>
</dbReference>
<dbReference type="InterPro" id="IPR050934">
    <property type="entry name" value="ITIH"/>
</dbReference>
<dbReference type="InterPro" id="IPR013694">
    <property type="entry name" value="VIT"/>
</dbReference>
<dbReference type="InterPro" id="IPR002035">
    <property type="entry name" value="VWF_A"/>
</dbReference>
<dbReference type="InterPro" id="IPR036465">
    <property type="entry name" value="vWFA_dom_sf"/>
</dbReference>
<dbReference type="PANTHER" id="PTHR10338">
    <property type="entry name" value="INTER-ALPHA-TRYPSIN INHIBITOR HEAVY CHAIN FAMILY MEMBER"/>
    <property type="match status" value="1"/>
</dbReference>
<dbReference type="PANTHER" id="PTHR10338:SF14">
    <property type="entry name" value="INTER-ALPHA-TRYPSIN INHIBITOR HEAVY CHAIN H2"/>
    <property type="match status" value="1"/>
</dbReference>
<dbReference type="Pfam" id="PF06668">
    <property type="entry name" value="ITI_HC_C"/>
    <property type="match status" value="1"/>
</dbReference>
<dbReference type="Pfam" id="PF08487">
    <property type="entry name" value="VIT"/>
    <property type="match status" value="1"/>
</dbReference>
<dbReference type="Pfam" id="PF00092">
    <property type="entry name" value="VWA"/>
    <property type="match status" value="1"/>
</dbReference>
<dbReference type="SMART" id="SM00609">
    <property type="entry name" value="VIT"/>
    <property type="match status" value="1"/>
</dbReference>
<dbReference type="SMART" id="SM00327">
    <property type="entry name" value="VWA"/>
    <property type="match status" value="1"/>
</dbReference>
<dbReference type="SUPFAM" id="SSF53300">
    <property type="entry name" value="vWA-like"/>
    <property type="match status" value="1"/>
</dbReference>
<dbReference type="PROSITE" id="PS51468">
    <property type="entry name" value="VIT"/>
    <property type="match status" value="1"/>
</dbReference>
<dbReference type="PROSITE" id="PS50234">
    <property type="entry name" value="VWFA"/>
    <property type="match status" value="1"/>
</dbReference>
<comment type="function">
    <text evidence="1">May act as a carrier of hyaluronan in serum or as a binding protein between hyaluronan and other matrix protein, including those on cell surfaces in tissues to regulate the localization, synthesis and degradation of hyaluronan which are essential to cells undergoing biological processes.</text>
</comment>
<comment type="subunit">
    <text evidence="2">I-alpha-I plasma protease inhibitors are assembled from one or two heavy chains (HC) and one light chain, bikunin. Inter-alpha-inhibitor (I-alpha-I) is composed of ITIH1/HC1, ITIH2/HC2 and bikunin.</text>
</comment>
<comment type="subcellular location">
    <subcellularLocation>
        <location>Secreted</location>
    </subcellularLocation>
</comment>
<comment type="tissue specificity">
    <text>Expressed in both liver and brain.</text>
</comment>
<comment type="PTM">
    <text evidence="1">Heavy chains are linked to bikunin via chondroitin 4-sulfate esterified to the alpha-carboxyl of the C-terminal aspartate after propeptide cleavage.</text>
</comment>
<comment type="PTM">
    <text evidence="2">Phosphorylated by FAM20C in the extracellular medium.</text>
</comment>
<comment type="similarity">
    <text evidence="8">Belongs to the ITIH family.</text>
</comment>
<comment type="sequence caution" evidence="8">
    <conflict type="erroneous initiation">
        <sequence resource="EMBL-CDS" id="BAE21837"/>
    </conflict>
</comment>
<feature type="signal peptide" evidence="3">
    <location>
        <begin position="1"/>
        <end position="18"/>
    </location>
</feature>
<feature type="propeptide" id="PRO_0000016520" evidence="1">
    <location>
        <begin position="19"/>
        <end position="54"/>
    </location>
</feature>
<feature type="chain" id="PRO_0000016521" description="Inter-alpha-trypsin inhibitor heavy chain H2">
    <location>
        <begin position="55"/>
        <end position="702"/>
    </location>
</feature>
<feature type="propeptide" id="PRO_0000016522" evidence="1">
    <location>
        <begin position="703"/>
        <end position="946"/>
    </location>
</feature>
<feature type="domain" description="VIT" evidence="5">
    <location>
        <begin position="56"/>
        <end position="185"/>
    </location>
</feature>
<feature type="domain" description="VWFA" evidence="4">
    <location>
        <begin position="308"/>
        <end position="468"/>
    </location>
</feature>
<feature type="modified residue" description="Phosphoserine" evidence="9 10 11">
    <location>
        <position position="60"/>
    </location>
</feature>
<feature type="modified residue" description="4-carboxyglutamate" evidence="2">
    <location>
        <position position="282"/>
    </location>
</feature>
<feature type="modified residue" description="4-carboxyglutamate" evidence="2">
    <location>
        <position position="283"/>
    </location>
</feature>
<feature type="modified residue" description="Phosphoserine" evidence="2">
    <location>
        <position position="466"/>
    </location>
</feature>
<feature type="modified residue" description="Aspartate 1-(chondroitin 4-sulfate)-ester" evidence="1">
    <location>
        <position position="702"/>
    </location>
</feature>
<feature type="modified residue" description="Phosphoserine" evidence="2">
    <location>
        <position position="886"/>
    </location>
</feature>
<feature type="glycosylation site" description="N-linked (GlcNAc...) asparagine" evidence="6 7">
    <location>
        <position position="118"/>
    </location>
</feature>
<feature type="glycosylation site" description="N-linked (GlcNAc...) asparagine" evidence="3">
    <location>
        <position position="263"/>
    </location>
</feature>
<feature type="glycosylation site" description="N-linked (GlcNAc...) asparagine" evidence="3">
    <location>
        <position position="445"/>
    </location>
</feature>
<feature type="sequence conflict" description="In Ref. 2; BAE21837." evidence="8" ref="2">
    <original>R</original>
    <variation>G</variation>
    <location>
        <position position="833"/>
    </location>
</feature>